<sequence length="485" mass="50457">MSASDFSSAVVVLAAGAGTRMKSDLQKTLHSIGGRSLISHSLHAAAGLNPEHIVAVIGHGRDQVGPAVAQVAEELDREVLIAIQEEQNGTGHAVQCAMDQLEGFEGTIIVTNGDVPLLTDHTLSALLDAHVEVPTAVTVLTMRLDDPTGYGRIVRNEEGEVTAIVEQKDASAEVQAIDEVNSGVFAFDAAILRSALAELKSDNAQGELYLTDVLGIARGEGHPVRAHTAADARELAGVNDRVQLAEAGAELNRRTVIAAMRGGATIVDPATTWIDVEVSIGRDVIIHPGTQLKGETVIGDRVEVGPDTTLTNMTIGDGASVIRTHGFDSTIGENATVGPFTYIRPGTTLGPEGKLGGFVETKKATIGRGSKVPHLTYVGDATIGEESNIGASSVFVNYDGENKHHTTIGSHVRTGSDTMFIAPVTVGDGAYSGAGTVIKDDVPPGALAVSGGRQRNIEGWVQKKRPGTAAAQAAEAAQNVHNQEG</sequence>
<name>GLMU_CORGL</name>
<comment type="function">
    <text evidence="1">Catalyzes the last two sequential reactions in the de novo biosynthetic pathway for UDP-N-acetylglucosamine (UDP-GlcNAc). The C-terminal domain catalyzes the transfer of acetyl group from acetyl coenzyme A to glucosamine-1-phosphate (GlcN-1-P) to produce N-acetylglucosamine-1-phosphate (GlcNAc-1-P), which is converted into UDP-GlcNAc by the transfer of uridine 5-monophosphate (from uridine 5-triphosphate), a reaction catalyzed by the N-terminal domain.</text>
</comment>
<comment type="catalytic activity">
    <reaction evidence="1">
        <text>alpha-D-glucosamine 1-phosphate + acetyl-CoA = N-acetyl-alpha-D-glucosamine 1-phosphate + CoA + H(+)</text>
        <dbReference type="Rhea" id="RHEA:13725"/>
        <dbReference type="ChEBI" id="CHEBI:15378"/>
        <dbReference type="ChEBI" id="CHEBI:57287"/>
        <dbReference type="ChEBI" id="CHEBI:57288"/>
        <dbReference type="ChEBI" id="CHEBI:57776"/>
        <dbReference type="ChEBI" id="CHEBI:58516"/>
        <dbReference type="EC" id="2.3.1.157"/>
    </reaction>
</comment>
<comment type="catalytic activity">
    <reaction evidence="1">
        <text>N-acetyl-alpha-D-glucosamine 1-phosphate + UTP + H(+) = UDP-N-acetyl-alpha-D-glucosamine + diphosphate</text>
        <dbReference type="Rhea" id="RHEA:13509"/>
        <dbReference type="ChEBI" id="CHEBI:15378"/>
        <dbReference type="ChEBI" id="CHEBI:33019"/>
        <dbReference type="ChEBI" id="CHEBI:46398"/>
        <dbReference type="ChEBI" id="CHEBI:57705"/>
        <dbReference type="ChEBI" id="CHEBI:57776"/>
        <dbReference type="EC" id="2.7.7.23"/>
    </reaction>
</comment>
<comment type="cofactor">
    <cofactor evidence="1">
        <name>Mg(2+)</name>
        <dbReference type="ChEBI" id="CHEBI:18420"/>
    </cofactor>
    <text evidence="1">Binds 1 Mg(2+) ion per subunit.</text>
</comment>
<comment type="pathway">
    <text evidence="1">Nucleotide-sugar biosynthesis; UDP-N-acetyl-alpha-D-glucosamine biosynthesis; N-acetyl-alpha-D-glucosamine 1-phosphate from alpha-D-glucosamine 6-phosphate (route II): step 2/2.</text>
</comment>
<comment type="pathway">
    <text evidence="1">Nucleotide-sugar biosynthesis; UDP-N-acetyl-alpha-D-glucosamine biosynthesis; UDP-N-acetyl-alpha-D-glucosamine from N-acetyl-alpha-D-glucosamine 1-phosphate: step 1/1.</text>
</comment>
<comment type="pathway">
    <text evidence="1">Bacterial outer membrane biogenesis; LPS lipid A biosynthesis.</text>
</comment>
<comment type="subunit">
    <text evidence="1">Homotrimer.</text>
</comment>
<comment type="subcellular location">
    <subcellularLocation>
        <location evidence="1">Cytoplasm</location>
    </subcellularLocation>
</comment>
<comment type="similarity">
    <text evidence="1">In the N-terminal section; belongs to the N-acetylglucosamine-1-phosphate uridyltransferase family.</text>
</comment>
<comment type="similarity">
    <text evidence="1">In the C-terminal section; belongs to the transferase hexapeptide repeat family.</text>
</comment>
<dbReference type="EC" id="2.7.7.23" evidence="1"/>
<dbReference type="EC" id="2.3.1.157" evidence="1"/>
<dbReference type="EMBL" id="BA000036">
    <property type="protein sequence ID" value="BAB98336.1"/>
    <property type="molecule type" value="Genomic_DNA"/>
</dbReference>
<dbReference type="EMBL" id="BX927150">
    <property type="protein sequence ID" value="CAF19650.1"/>
    <property type="molecule type" value="Genomic_DNA"/>
</dbReference>
<dbReference type="RefSeq" id="NP_600171.1">
    <property type="nucleotide sequence ID" value="NC_003450.3"/>
</dbReference>
<dbReference type="RefSeq" id="WP_011013993.1">
    <property type="nucleotide sequence ID" value="NC_006958.1"/>
</dbReference>
<dbReference type="SMR" id="Q8NRU8"/>
<dbReference type="STRING" id="196627.cg1076"/>
<dbReference type="GeneID" id="1018935"/>
<dbReference type="KEGG" id="cgb:cg1076"/>
<dbReference type="KEGG" id="cgl:Cgl0943"/>
<dbReference type="PATRIC" id="fig|196627.13.peg.930"/>
<dbReference type="eggNOG" id="COG1207">
    <property type="taxonomic scope" value="Bacteria"/>
</dbReference>
<dbReference type="HOGENOM" id="CLU_029499_15_2_11"/>
<dbReference type="OrthoDB" id="9775031at2"/>
<dbReference type="BioCyc" id="CORYNE:G18NG-10513-MONOMER"/>
<dbReference type="UniPathway" id="UPA00113">
    <property type="reaction ID" value="UER00532"/>
</dbReference>
<dbReference type="UniPathway" id="UPA00113">
    <property type="reaction ID" value="UER00533"/>
</dbReference>
<dbReference type="UniPathway" id="UPA00973"/>
<dbReference type="Proteomes" id="UP000000582">
    <property type="component" value="Chromosome"/>
</dbReference>
<dbReference type="Proteomes" id="UP000001009">
    <property type="component" value="Chromosome"/>
</dbReference>
<dbReference type="GO" id="GO:0005737">
    <property type="term" value="C:cytoplasm"/>
    <property type="evidence" value="ECO:0007669"/>
    <property type="project" value="UniProtKB-SubCell"/>
</dbReference>
<dbReference type="GO" id="GO:0016020">
    <property type="term" value="C:membrane"/>
    <property type="evidence" value="ECO:0007669"/>
    <property type="project" value="GOC"/>
</dbReference>
<dbReference type="GO" id="GO:0019134">
    <property type="term" value="F:glucosamine-1-phosphate N-acetyltransferase activity"/>
    <property type="evidence" value="ECO:0007669"/>
    <property type="project" value="UniProtKB-UniRule"/>
</dbReference>
<dbReference type="GO" id="GO:0000287">
    <property type="term" value="F:magnesium ion binding"/>
    <property type="evidence" value="ECO:0007669"/>
    <property type="project" value="UniProtKB-UniRule"/>
</dbReference>
<dbReference type="GO" id="GO:0003977">
    <property type="term" value="F:UDP-N-acetylglucosamine diphosphorylase activity"/>
    <property type="evidence" value="ECO:0007669"/>
    <property type="project" value="UniProtKB-UniRule"/>
</dbReference>
<dbReference type="GO" id="GO:0000902">
    <property type="term" value="P:cell morphogenesis"/>
    <property type="evidence" value="ECO:0007669"/>
    <property type="project" value="UniProtKB-UniRule"/>
</dbReference>
<dbReference type="GO" id="GO:0071555">
    <property type="term" value="P:cell wall organization"/>
    <property type="evidence" value="ECO:0007669"/>
    <property type="project" value="UniProtKB-KW"/>
</dbReference>
<dbReference type="GO" id="GO:0009245">
    <property type="term" value="P:lipid A biosynthetic process"/>
    <property type="evidence" value="ECO:0007669"/>
    <property type="project" value="UniProtKB-UniRule"/>
</dbReference>
<dbReference type="GO" id="GO:0009252">
    <property type="term" value="P:peptidoglycan biosynthetic process"/>
    <property type="evidence" value="ECO:0007669"/>
    <property type="project" value="UniProtKB-UniRule"/>
</dbReference>
<dbReference type="GO" id="GO:0008360">
    <property type="term" value="P:regulation of cell shape"/>
    <property type="evidence" value="ECO:0007669"/>
    <property type="project" value="UniProtKB-KW"/>
</dbReference>
<dbReference type="GO" id="GO:0006048">
    <property type="term" value="P:UDP-N-acetylglucosamine biosynthetic process"/>
    <property type="evidence" value="ECO:0007669"/>
    <property type="project" value="UniProtKB-UniPathway"/>
</dbReference>
<dbReference type="CDD" id="cd02540">
    <property type="entry name" value="GT2_GlmU_N_bac"/>
    <property type="match status" value="1"/>
</dbReference>
<dbReference type="CDD" id="cd03353">
    <property type="entry name" value="LbH_GlmU_C"/>
    <property type="match status" value="1"/>
</dbReference>
<dbReference type="Gene3D" id="2.160.10.10">
    <property type="entry name" value="Hexapeptide repeat proteins"/>
    <property type="match status" value="1"/>
</dbReference>
<dbReference type="Gene3D" id="3.90.550.10">
    <property type="entry name" value="Spore Coat Polysaccharide Biosynthesis Protein SpsA, Chain A"/>
    <property type="match status" value="1"/>
</dbReference>
<dbReference type="HAMAP" id="MF_01631">
    <property type="entry name" value="GlmU"/>
    <property type="match status" value="1"/>
</dbReference>
<dbReference type="InterPro" id="IPR005882">
    <property type="entry name" value="Bifunctional_GlmU"/>
</dbReference>
<dbReference type="InterPro" id="IPR050065">
    <property type="entry name" value="GlmU-like"/>
</dbReference>
<dbReference type="InterPro" id="IPR038009">
    <property type="entry name" value="GlmU_C_LbH"/>
</dbReference>
<dbReference type="InterPro" id="IPR001451">
    <property type="entry name" value="Hexapep"/>
</dbReference>
<dbReference type="InterPro" id="IPR005835">
    <property type="entry name" value="NTP_transferase_dom"/>
</dbReference>
<dbReference type="InterPro" id="IPR029044">
    <property type="entry name" value="Nucleotide-diphossugar_trans"/>
</dbReference>
<dbReference type="InterPro" id="IPR011004">
    <property type="entry name" value="Trimer_LpxA-like_sf"/>
</dbReference>
<dbReference type="NCBIfam" id="TIGR01173">
    <property type="entry name" value="glmU"/>
    <property type="match status" value="1"/>
</dbReference>
<dbReference type="NCBIfam" id="NF010932">
    <property type="entry name" value="PRK14352.1"/>
    <property type="match status" value="1"/>
</dbReference>
<dbReference type="PANTHER" id="PTHR43584:SF3">
    <property type="entry name" value="BIFUNCTIONAL PROTEIN GLMU"/>
    <property type="match status" value="1"/>
</dbReference>
<dbReference type="PANTHER" id="PTHR43584">
    <property type="entry name" value="NUCLEOTIDYL TRANSFERASE"/>
    <property type="match status" value="1"/>
</dbReference>
<dbReference type="Pfam" id="PF00132">
    <property type="entry name" value="Hexapep"/>
    <property type="match status" value="1"/>
</dbReference>
<dbReference type="Pfam" id="PF00483">
    <property type="entry name" value="NTP_transferase"/>
    <property type="match status" value="1"/>
</dbReference>
<dbReference type="SUPFAM" id="SSF53448">
    <property type="entry name" value="Nucleotide-diphospho-sugar transferases"/>
    <property type="match status" value="1"/>
</dbReference>
<dbReference type="SUPFAM" id="SSF51161">
    <property type="entry name" value="Trimeric LpxA-like enzymes"/>
    <property type="match status" value="1"/>
</dbReference>
<reference key="1">
    <citation type="journal article" date="2003" name="Appl. Microbiol. Biotechnol.">
        <title>The Corynebacterium glutamicum genome: features and impacts on biotechnological processes.</title>
        <authorList>
            <person name="Ikeda M."/>
            <person name="Nakagawa S."/>
        </authorList>
    </citation>
    <scope>NUCLEOTIDE SEQUENCE [LARGE SCALE GENOMIC DNA]</scope>
    <source>
        <strain>ATCC 13032 / DSM 20300 / JCM 1318 / BCRC 11384 / CCUG 27702 / LMG 3730 / NBRC 12168 / NCIMB 10025 / NRRL B-2784 / 534</strain>
    </source>
</reference>
<reference key="2">
    <citation type="journal article" date="2003" name="J. Biotechnol.">
        <title>The complete Corynebacterium glutamicum ATCC 13032 genome sequence and its impact on the production of L-aspartate-derived amino acids and vitamins.</title>
        <authorList>
            <person name="Kalinowski J."/>
            <person name="Bathe B."/>
            <person name="Bartels D."/>
            <person name="Bischoff N."/>
            <person name="Bott M."/>
            <person name="Burkovski A."/>
            <person name="Dusch N."/>
            <person name="Eggeling L."/>
            <person name="Eikmanns B.J."/>
            <person name="Gaigalat L."/>
            <person name="Goesmann A."/>
            <person name="Hartmann M."/>
            <person name="Huthmacher K."/>
            <person name="Kraemer R."/>
            <person name="Linke B."/>
            <person name="McHardy A.C."/>
            <person name="Meyer F."/>
            <person name="Moeckel B."/>
            <person name="Pfefferle W."/>
            <person name="Puehler A."/>
            <person name="Rey D.A."/>
            <person name="Rueckert C."/>
            <person name="Rupp O."/>
            <person name="Sahm H."/>
            <person name="Wendisch V.F."/>
            <person name="Wiegraebe I."/>
            <person name="Tauch A."/>
        </authorList>
    </citation>
    <scope>NUCLEOTIDE SEQUENCE [LARGE SCALE GENOMIC DNA]</scope>
    <source>
        <strain>ATCC 13032 / DSM 20300 / JCM 1318 / BCRC 11384 / CCUG 27702 / LMG 3730 / NBRC 12168 / NCIMB 10025 / NRRL B-2784 / 534</strain>
    </source>
</reference>
<accession>Q8NRU8</accession>
<accession>Q6M6K8</accession>
<evidence type="ECO:0000255" key="1">
    <source>
        <dbReference type="HAMAP-Rule" id="MF_01631"/>
    </source>
</evidence>
<evidence type="ECO:0000256" key="2">
    <source>
        <dbReference type="SAM" id="MobiDB-lite"/>
    </source>
</evidence>
<gene>
    <name evidence="1" type="primary">glmU</name>
    <name type="ordered locus">Cgl0943</name>
    <name type="ordered locus">cg1076</name>
</gene>
<proteinExistence type="inferred from homology"/>
<feature type="chain" id="PRO_0000233762" description="Bifunctional protein GlmU">
    <location>
        <begin position="1"/>
        <end position="485"/>
    </location>
</feature>
<feature type="region of interest" description="Pyrophosphorylase" evidence="1">
    <location>
        <begin position="1"/>
        <end position="241"/>
    </location>
</feature>
<feature type="region of interest" description="Linker" evidence="1">
    <location>
        <begin position="242"/>
        <end position="262"/>
    </location>
</feature>
<feature type="region of interest" description="N-acetyltransferase" evidence="1">
    <location>
        <begin position="263"/>
        <end position="485"/>
    </location>
</feature>
<feature type="region of interest" description="Disordered" evidence="2">
    <location>
        <begin position="465"/>
        <end position="485"/>
    </location>
</feature>
<feature type="compositionally biased region" description="Low complexity" evidence="2">
    <location>
        <begin position="469"/>
        <end position="478"/>
    </location>
</feature>
<feature type="active site" description="Proton acceptor" evidence="1">
    <location>
        <position position="374"/>
    </location>
</feature>
<feature type="binding site" evidence="1">
    <location>
        <begin position="13"/>
        <end position="16"/>
    </location>
    <ligand>
        <name>UDP-N-acetyl-alpha-D-glucosamine</name>
        <dbReference type="ChEBI" id="CHEBI:57705"/>
    </ligand>
</feature>
<feature type="binding site" evidence="1">
    <location>
        <position position="27"/>
    </location>
    <ligand>
        <name>UDP-N-acetyl-alpha-D-glucosamine</name>
        <dbReference type="ChEBI" id="CHEBI:57705"/>
    </ligand>
</feature>
<feature type="binding site" evidence="1">
    <location>
        <position position="84"/>
    </location>
    <ligand>
        <name>UDP-N-acetyl-alpha-D-glucosamine</name>
        <dbReference type="ChEBI" id="CHEBI:57705"/>
    </ligand>
</feature>
<feature type="binding site" evidence="1">
    <location>
        <begin position="89"/>
        <end position="90"/>
    </location>
    <ligand>
        <name>UDP-N-acetyl-alpha-D-glucosamine</name>
        <dbReference type="ChEBI" id="CHEBI:57705"/>
    </ligand>
</feature>
<feature type="binding site" evidence="1">
    <location>
        <position position="114"/>
    </location>
    <ligand>
        <name>Mg(2+)</name>
        <dbReference type="ChEBI" id="CHEBI:18420"/>
    </ligand>
</feature>
<feature type="binding site" evidence="1">
    <location>
        <position position="151"/>
    </location>
    <ligand>
        <name>UDP-N-acetyl-alpha-D-glucosamine</name>
        <dbReference type="ChEBI" id="CHEBI:57705"/>
    </ligand>
</feature>
<feature type="binding site" evidence="1">
    <location>
        <position position="166"/>
    </location>
    <ligand>
        <name>UDP-N-acetyl-alpha-D-glucosamine</name>
        <dbReference type="ChEBI" id="CHEBI:57705"/>
    </ligand>
</feature>
<feature type="binding site" evidence="1">
    <location>
        <position position="181"/>
    </location>
    <ligand>
        <name>UDP-N-acetyl-alpha-D-glucosamine</name>
        <dbReference type="ChEBI" id="CHEBI:57705"/>
    </ligand>
</feature>
<feature type="binding site" evidence="1">
    <location>
        <position position="239"/>
    </location>
    <ligand>
        <name>Mg(2+)</name>
        <dbReference type="ChEBI" id="CHEBI:18420"/>
    </ligand>
</feature>
<feature type="binding site" evidence="1">
    <location>
        <position position="239"/>
    </location>
    <ligand>
        <name>UDP-N-acetyl-alpha-D-glucosamine</name>
        <dbReference type="ChEBI" id="CHEBI:57705"/>
    </ligand>
</feature>
<feature type="binding site" evidence="1">
    <location>
        <position position="344"/>
    </location>
    <ligand>
        <name>UDP-N-acetyl-alpha-D-glucosamine</name>
        <dbReference type="ChEBI" id="CHEBI:57705"/>
    </ligand>
</feature>
<feature type="binding site" evidence="1">
    <location>
        <position position="362"/>
    </location>
    <ligand>
        <name>UDP-N-acetyl-alpha-D-glucosamine</name>
        <dbReference type="ChEBI" id="CHEBI:57705"/>
    </ligand>
</feature>
<feature type="binding site" evidence="1">
    <location>
        <position position="377"/>
    </location>
    <ligand>
        <name>UDP-N-acetyl-alpha-D-glucosamine</name>
        <dbReference type="ChEBI" id="CHEBI:57705"/>
    </ligand>
</feature>
<feature type="binding site" evidence="1">
    <location>
        <position position="388"/>
    </location>
    <ligand>
        <name>UDP-N-acetyl-alpha-D-glucosamine</name>
        <dbReference type="ChEBI" id="CHEBI:57705"/>
    </ligand>
</feature>
<feature type="binding site" evidence="1">
    <location>
        <position position="391"/>
    </location>
    <ligand>
        <name>acetyl-CoA</name>
        <dbReference type="ChEBI" id="CHEBI:57288"/>
    </ligand>
</feature>
<feature type="binding site" evidence="1">
    <location>
        <begin position="397"/>
        <end position="398"/>
    </location>
    <ligand>
        <name>acetyl-CoA</name>
        <dbReference type="ChEBI" id="CHEBI:57288"/>
    </ligand>
</feature>
<feature type="binding site" evidence="1">
    <location>
        <position position="416"/>
    </location>
    <ligand>
        <name>acetyl-CoA</name>
        <dbReference type="ChEBI" id="CHEBI:57288"/>
    </ligand>
</feature>
<feature type="binding site" evidence="1">
    <location>
        <position position="434"/>
    </location>
    <ligand>
        <name>acetyl-CoA</name>
        <dbReference type="ChEBI" id="CHEBI:57288"/>
    </ligand>
</feature>
<protein>
    <recommendedName>
        <fullName evidence="1">Bifunctional protein GlmU</fullName>
    </recommendedName>
    <domain>
        <recommendedName>
            <fullName evidence="1">UDP-N-acetylglucosamine pyrophosphorylase</fullName>
            <ecNumber evidence="1">2.7.7.23</ecNumber>
        </recommendedName>
        <alternativeName>
            <fullName evidence="1">N-acetylglucosamine-1-phosphate uridyltransferase</fullName>
        </alternativeName>
    </domain>
    <domain>
        <recommendedName>
            <fullName evidence="1">Glucosamine-1-phosphate N-acetyltransferase</fullName>
            <ecNumber evidence="1">2.3.1.157</ecNumber>
        </recommendedName>
    </domain>
</protein>
<organism>
    <name type="scientific">Corynebacterium glutamicum (strain ATCC 13032 / DSM 20300 / JCM 1318 / BCRC 11384 / CCUG 27702 / LMG 3730 / NBRC 12168 / NCIMB 10025 / NRRL B-2784 / 534)</name>
    <dbReference type="NCBI Taxonomy" id="196627"/>
    <lineage>
        <taxon>Bacteria</taxon>
        <taxon>Bacillati</taxon>
        <taxon>Actinomycetota</taxon>
        <taxon>Actinomycetes</taxon>
        <taxon>Mycobacteriales</taxon>
        <taxon>Corynebacteriaceae</taxon>
        <taxon>Corynebacterium</taxon>
    </lineage>
</organism>
<keyword id="KW-0012">Acyltransferase</keyword>
<keyword id="KW-0133">Cell shape</keyword>
<keyword id="KW-0961">Cell wall biogenesis/degradation</keyword>
<keyword id="KW-0963">Cytoplasm</keyword>
<keyword id="KW-0460">Magnesium</keyword>
<keyword id="KW-0479">Metal-binding</keyword>
<keyword id="KW-0511">Multifunctional enzyme</keyword>
<keyword id="KW-0548">Nucleotidyltransferase</keyword>
<keyword id="KW-0573">Peptidoglycan synthesis</keyword>
<keyword id="KW-1185">Reference proteome</keyword>
<keyword id="KW-0677">Repeat</keyword>
<keyword id="KW-0808">Transferase</keyword>